<comment type="similarity">
    <text evidence="1">Belongs to the metallo-dependent hydrolases superfamily.</text>
</comment>
<dbReference type="EMBL" id="L77117">
    <property type="protein sequence ID" value="AAB98692.1"/>
    <property type="molecule type" value="Genomic_DNA"/>
</dbReference>
<dbReference type="PIR" id="C64387">
    <property type="entry name" value="C64387"/>
</dbReference>
<dbReference type="RefSeq" id="WP_010870204.1">
    <property type="nucleotide sequence ID" value="NC_000909.1"/>
</dbReference>
<dbReference type="SMR" id="Q58110"/>
<dbReference type="FunCoup" id="Q58110">
    <property type="interactions" value="1"/>
</dbReference>
<dbReference type="STRING" id="243232.MJ_0699"/>
<dbReference type="PaxDb" id="243232-MJ_0699"/>
<dbReference type="EnsemblBacteria" id="AAB98692">
    <property type="protein sequence ID" value="AAB98692"/>
    <property type="gene ID" value="MJ_0699"/>
</dbReference>
<dbReference type="GeneID" id="1451566"/>
<dbReference type="KEGG" id="mja:MJ_0699"/>
<dbReference type="eggNOG" id="arCOG00692">
    <property type="taxonomic scope" value="Archaea"/>
</dbReference>
<dbReference type="HOGENOM" id="CLU_012358_1_0_2"/>
<dbReference type="InParanoid" id="Q58110"/>
<dbReference type="OrthoDB" id="42910at2157"/>
<dbReference type="PhylomeDB" id="Q58110"/>
<dbReference type="Proteomes" id="UP000000805">
    <property type="component" value="Chromosome"/>
</dbReference>
<dbReference type="GO" id="GO:0016810">
    <property type="term" value="F:hydrolase activity, acting on carbon-nitrogen (but not peptide) bonds"/>
    <property type="evidence" value="ECO:0007669"/>
    <property type="project" value="InterPro"/>
</dbReference>
<dbReference type="CDD" id="cd01305">
    <property type="entry name" value="archeal_chlorohydrolases"/>
    <property type="match status" value="1"/>
</dbReference>
<dbReference type="FunFam" id="3.20.20.140:FF:000267">
    <property type="entry name" value="Uncharacterized protein MJ0699"/>
    <property type="match status" value="1"/>
</dbReference>
<dbReference type="Gene3D" id="3.20.20.140">
    <property type="entry name" value="Metal-dependent hydrolases"/>
    <property type="match status" value="1"/>
</dbReference>
<dbReference type="Gene3D" id="2.30.40.10">
    <property type="entry name" value="Urease, subunit C, domain 1"/>
    <property type="match status" value="1"/>
</dbReference>
<dbReference type="InterPro" id="IPR006680">
    <property type="entry name" value="Amidohydro-rel"/>
</dbReference>
<dbReference type="InterPro" id="IPR011059">
    <property type="entry name" value="Metal-dep_hydrolase_composite"/>
</dbReference>
<dbReference type="InterPro" id="IPR032466">
    <property type="entry name" value="Metal_Hydrolase"/>
</dbReference>
<dbReference type="InterPro" id="IPR050287">
    <property type="entry name" value="MTA/SAH_deaminase"/>
</dbReference>
<dbReference type="NCBIfam" id="NF005552">
    <property type="entry name" value="PRK07213.1"/>
    <property type="match status" value="1"/>
</dbReference>
<dbReference type="PANTHER" id="PTHR43794">
    <property type="entry name" value="AMINOHYDROLASE SSNA-RELATED"/>
    <property type="match status" value="1"/>
</dbReference>
<dbReference type="PANTHER" id="PTHR43794:SF5">
    <property type="entry name" value="CHLOROHYDROLASE FAMILY PROTEIN"/>
    <property type="match status" value="1"/>
</dbReference>
<dbReference type="Pfam" id="PF01979">
    <property type="entry name" value="Amidohydro_1"/>
    <property type="match status" value="1"/>
</dbReference>
<dbReference type="SUPFAM" id="SSF51556">
    <property type="entry name" value="Metallo-dependent hydrolases"/>
    <property type="match status" value="1"/>
</dbReference>
<organism>
    <name type="scientific">Methanocaldococcus jannaschii (strain ATCC 43067 / DSM 2661 / JAL-1 / JCM 10045 / NBRC 100440)</name>
    <name type="common">Methanococcus jannaschii</name>
    <dbReference type="NCBI Taxonomy" id="243232"/>
    <lineage>
        <taxon>Archaea</taxon>
        <taxon>Methanobacteriati</taxon>
        <taxon>Methanobacteriota</taxon>
        <taxon>Methanomada group</taxon>
        <taxon>Methanococci</taxon>
        <taxon>Methanococcales</taxon>
        <taxon>Methanocaldococcaceae</taxon>
        <taxon>Methanocaldococcus</taxon>
    </lineage>
</organism>
<feature type="chain" id="PRO_0000106994" description="Uncharacterized protein MJ0699">
    <location>
        <begin position="1"/>
        <end position="380"/>
    </location>
</feature>
<gene>
    <name type="ordered locus">MJ0699</name>
</gene>
<proteinExistence type="inferred from homology"/>
<name>Y699_METJA</name>
<reference key="1">
    <citation type="journal article" date="1996" name="Science">
        <title>Complete genome sequence of the methanogenic archaeon, Methanococcus jannaschii.</title>
        <authorList>
            <person name="Bult C.J."/>
            <person name="White O."/>
            <person name="Olsen G.J."/>
            <person name="Zhou L."/>
            <person name="Fleischmann R.D."/>
            <person name="Sutton G.G."/>
            <person name="Blake J.A."/>
            <person name="FitzGerald L.M."/>
            <person name="Clayton R.A."/>
            <person name="Gocayne J.D."/>
            <person name="Kerlavage A.R."/>
            <person name="Dougherty B.A."/>
            <person name="Tomb J.-F."/>
            <person name="Adams M.D."/>
            <person name="Reich C.I."/>
            <person name="Overbeek R."/>
            <person name="Kirkness E.F."/>
            <person name="Weinstock K.G."/>
            <person name="Merrick J.M."/>
            <person name="Glodek A."/>
            <person name="Scott J.L."/>
            <person name="Geoghagen N.S.M."/>
            <person name="Weidman J.F."/>
            <person name="Fuhrmann J.L."/>
            <person name="Nguyen D."/>
            <person name="Utterback T.R."/>
            <person name="Kelley J.M."/>
            <person name="Peterson J.D."/>
            <person name="Sadow P.W."/>
            <person name="Hanna M.C."/>
            <person name="Cotton M.D."/>
            <person name="Roberts K.M."/>
            <person name="Hurst M.A."/>
            <person name="Kaine B.P."/>
            <person name="Borodovsky M."/>
            <person name="Klenk H.-P."/>
            <person name="Fraser C.M."/>
            <person name="Smith H.O."/>
            <person name="Woese C.R."/>
            <person name="Venter J.C."/>
        </authorList>
    </citation>
    <scope>NUCLEOTIDE SEQUENCE [LARGE SCALE GENOMIC DNA]</scope>
    <source>
        <strain>ATCC 43067 / DSM 2661 / JAL-1 / JCM 10045 / NBRC 100440</strain>
    </source>
</reference>
<protein>
    <recommendedName>
        <fullName>Uncharacterized protein MJ0699</fullName>
    </recommendedName>
</protein>
<sequence>MVVFLLLKSQFLYGEDFKLRKGTLIIEEGIIKGFTDEHNEREVIEFKGLVIPSLINAHTHIADNSIKDIGINKTLDELVKPPNGLKHRYLTECSDDLLAEGMKLGLGDMREHGIKYFCDFRENGVRGISLLNKALKCYDYPKAIILGRPIKVDKDEIEEVLKVSNGLGLSGANEFKDDELKLIFKIFKKFKEKDDKKLFAIHAAEHRGAVEYSLNKYGMTEVERLIDLKIKPDFIVHGTHLTDNDLELLKENNIPVVACVRANLSFNVGMPKLNELNDNLLVGIGTDNFMANSPSIFKEMDFIYKLYHIEPKDILRMATINNAKILKLENVGLVDEGFKAVFTFIKPTNAILFSKNIIASVVTRCEKGDVVDFSLMENEE</sequence>
<accession>Q58110</accession>
<keyword id="KW-1185">Reference proteome</keyword>
<evidence type="ECO:0000305" key="1"/>